<gene>
    <name evidence="1" type="primary">pyrG</name>
    <name type="ordered locus">SAG0107</name>
</gene>
<dbReference type="EC" id="6.3.4.2" evidence="1"/>
<dbReference type="EMBL" id="AE009948">
    <property type="protein sequence ID" value="AAM99015.1"/>
    <property type="molecule type" value="Genomic_DNA"/>
</dbReference>
<dbReference type="RefSeq" id="NP_687143.1">
    <property type="nucleotide sequence ID" value="NC_004116.1"/>
</dbReference>
<dbReference type="RefSeq" id="WP_000170435.1">
    <property type="nucleotide sequence ID" value="NC_004116.1"/>
</dbReference>
<dbReference type="SMR" id="Q8E290"/>
<dbReference type="STRING" id="208435.SAG0107"/>
<dbReference type="KEGG" id="sag:SAG0107"/>
<dbReference type="PATRIC" id="fig|208435.3.peg.106"/>
<dbReference type="HOGENOM" id="CLU_011675_5_0_9"/>
<dbReference type="OrthoDB" id="9801107at2"/>
<dbReference type="UniPathway" id="UPA00159">
    <property type="reaction ID" value="UER00277"/>
</dbReference>
<dbReference type="Proteomes" id="UP000000821">
    <property type="component" value="Chromosome"/>
</dbReference>
<dbReference type="GO" id="GO:0005829">
    <property type="term" value="C:cytosol"/>
    <property type="evidence" value="ECO:0007669"/>
    <property type="project" value="TreeGrafter"/>
</dbReference>
<dbReference type="GO" id="GO:0005524">
    <property type="term" value="F:ATP binding"/>
    <property type="evidence" value="ECO:0007669"/>
    <property type="project" value="UniProtKB-KW"/>
</dbReference>
<dbReference type="GO" id="GO:0003883">
    <property type="term" value="F:CTP synthase activity"/>
    <property type="evidence" value="ECO:0007669"/>
    <property type="project" value="UniProtKB-UniRule"/>
</dbReference>
<dbReference type="GO" id="GO:0004359">
    <property type="term" value="F:glutaminase activity"/>
    <property type="evidence" value="ECO:0007669"/>
    <property type="project" value="RHEA"/>
</dbReference>
<dbReference type="GO" id="GO:0042802">
    <property type="term" value="F:identical protein binding"/>
    <property type="evidence" value="ECO:0007669"/>
    <property type="project" value="TreeGrafter"/>
</dbReference>
<dbReference type="GO" id="GO:0046872">
    <property type="term" value="F:metal ion binding"/>
    <property type="evidence" value="ECO:0007669"/>
    <property type="project" value="UniProtKB-KW"/>
</dbReference>
<dbReference type="GO" id="GO:0044210">
    <property type="term" value="P:'de novo' CTP biosynthetic process"/>
    <property type="evidence" value="ECO:0007669"/>
    <property type="project" value="UniProtKB-UniRule"/>
</dbReference>
<dbReference type="GO" id="GO:0019856">
    <property type="term" value="P:pyrimidine nucleobase biosynthetic process"/>
    <property type="evidence" value="ECO:0007669"/>
    <property type="project" value="TreeGrafter"/>
</dbReference>
<dbReference type="CDD" id="cd03113">
    <property type="entry name" value="CTPS_N"/>
    <property type="match status" value="1"/>
</dbReference>
<dbReference type="CDD" id="cd01746">
    <property type="entry name" value="GATase1_CTP_Synthase"/>
    <property type="match status" value="1"/>
</dbReference>
<dbReference type="FunFam" id="3.40.50.300:FF:000009">
    <property type="entry name" value="CTP synthase"/>
    <property type="match status" value="1"/>
</dbReference>
<dbReference type="FunFam" id="3.40.50.880:FF:000002">
    <property type="entry name" value="CTP synthase"/>
    <property type="match status" value="1"/>
</dbReference>
<dbReference type="Gene3D" id="3.40.50.880">
    <property type="match status" value="1"/>
</dbReference>
<dbReference type="Gene3D" id="3.40.50.300">
    <property type="entry name" value="P-loop containing nucleotide triphosphate hydrolases"/>
    <property type="match status" value="1"/>
</dbReference>
<dbReference type="HAMAP" id="MF_01227">
    <property type="entry name" value="PyrG"/>
    <property type="match status" value="1"/>
</dbReference>
<dbReference type="InterPro" id="IPR029062">
    <property type="entry name" value="Class_I_gatase-like"/>
</dbReference>
<dbReference type="InterPro" id="IPR004468">
    <property type="entry name" value="CTP_synthase"/>
</dbReference>
<dbReference type="InterPro" id="IPR017456">
    <property type="entry name" value="CTP_synthase_N"/>
</dbReference>
<dbReference type="InterPro" id="IPR017926">
    <property type="entry name" value="GATASE"/>
</dbReference>
<dbReference type="InterPro" id="IPR033828">
    <property type="entry name" value="GATase1_CTP_Synthase"/>
</dbReference>
<dbReference type="InterPro" id="IPR027417">
    <property type="entry name" value="P-loop_NTPase"/>
</dbReference>
<dbReference type="NCBIfam" id="NF003792">
    <property type="entry name" value="PRK05380.1"/>
    <property type="match status" value="1"/>
</dbReference>
<dbReference type="NCBIfam" id="TIGR00337">
    <property type="entry name" value="PyrG"/>
    <property type="match status" value="1"/>
</dbReference>
<dbReference type="PANTHER" id="PTHR11550">
    <property type="entry name" value="CTP SYNTHASE"/>
    <property type="match status" value="1"/>
</dbReference>
<dbReference type="PANTHER" id="PTHR11550:SF0">
    <property type="entry name" value="CTP SYNTHASE-RELATED"/>
    <property type="match status" value="1"/>
</dbReference>
<dbReference type="Pfam" id="PF06418">
    <property type="entry name" value="CTP_synth_N"/>
    <property type="match status" value="1"/>
</dbReference>
<dbReference type="Pfam" id="PF00117">
    <property type="entry name" value="GATase"/>
    <property type="match status" value="1"/>
</dbReference>
<dbReference type="SUPFAM" id="SSF52317">
    <property type="entry name" value="Class I glutamine amidotransferase-like"/>
    <property type="match status" value="1"/>
</dbReference>
<dbReference type="SUPFAM" id="SSF52540">
    <property type="entry name" value="P-loop containing nucleoside triphosphate hydrolases"/>
    <property type="match status" value="1"/>
</dbReference>
<dbReference type="PROSITE" id="PS51273">
    <property type="entry name" value="GATASE_TYPE_1"/>
    <property type="match status" value="1"/>
</dbReference>
<sequence>MTKYIFVTGGVVSSIGKGIVAASLGRLLKNRGLKVTIQKFDPYINIDPGTMSPYQHGEVYVTDDGAETDLDLGHYERFIDINLNKYSNVTTGKIYSEVLKKERRGEYLGATVQVIPHVTDALKEKIKRAATTTDSDVIITEVGGTVGDIESLPFLEALRQMKADVGSDNVMYIHTTLLPYLKAAGEMKTKPTQHSVKELRGLGIQPNMLVIRTEQPAGQSIKNKLAQFCDVAPEAVIESLDVDHIYQIPLNMQAQNMDQIVCDHLKLETPAADMTEWSAMVDKVMNLEKKVKIALVGKYVELPDAYLSVVEALKHSGYVNDVAIDLKWVNAAEVTEDNIKELVGDADGIIVPGGFGQRGSEGKIEAIRYARENDVPMLGVCLGMQLTCVEFARNVLNLHGANSAELDPKTPFPIIDIMRDQIDIEDMGGTLRLGLYPCKLKSGSRAAAAYNNQEVVQRRHRHRYEFNTKFREQFEAAGFVFSGVSPDNRLMEVVELPEKKFFVAAQYHPELQSRPNHAEELYTAFVTAAVENMK</sequence>
<evidence type="ECO:0000255" key="1">
    <source>
        <dbReference type="HAMAP-Rule" id="MF_01227"/>
    </source>
</evidence>
<organism>
    <name type="scientific">Streptococcus agalactiae serotype V (strain ATCC BAA-611 / 2603 V/R)</name>
    <dbReference type="NCBI Taxonomy" id="208435"/>
    <lineage>
        <taxon>Bacteria</taxon>
        <taxon>Bacillati</taxon>
        <taxon>Bacillota</taxon>
        <taxon>Bacilli</taxon>
        <taxon>Lactobacillales</taxon>
        <taxon>Streptococcaceae</taxon>
        <taxon>Streptococcus</taxon>
    </lineage>
</organism>
<keyword id="KW-0067">ATP-binding</keyword>
<keyword id="KW-0315">Glutamine amidotransferase</keyword>
<keyword id="KW-0436">Ligase</keyword>
<keyword id="KW-0460">Magnesium</keyword>
<keyword id="KW-0479">Metal-binding</keyword>
<keyword id="KW-0547">Nucleotide-binding</keyword>
<keyword id="KW-0665">Pyrimidine biosynthesis</keyword>
<keyword id="KW-1185">Reference proteome</keyword>
<name>PYRG_STRA5</name>
<comment type="function">
    <text evidence="1">Catalyzes the ATP-dependent amination of UTP to CTP with either L-glutamine or ammonia as the source of nitrogen. Regulates intracellular CTP levels through interactions with the four ribonucleotide triphosphates.</text>
</comment>
<comment type="catalytic activity">
    <reaction evidence="1">
        <text>UTP + L-glutamine + ATP + H2O = CTP + L-glutamate + ADP + phosphate + 2 H(+)</text>
        <dbReference type="Rhea" id="RHEA:26426"/>
        <dbReference type="ChEBI" id="CHEBI:15377"/>
        <dbReference type="ChEBI" id="CHEBI:15378"/>
        <dbReference type="ChEBI" id="CHEBI:29985"/>
        <dbReference type="ChEBI" id="CHEBI:30616"/>
        <dbReference type="ChEBI" id="CHEBI:37563"/>
        <dbReference type="ChEBI" id="CHEBI:43474"/>
        <dbReference type="ChEBI" id="CHEBI:46398"/>
        <dbReference type="ChEBI" id="CHEBI:58359"/>
        <dbReference type="ChEBI" id="CHEBI:456216"/>
        <dbReference type="EC" id="6.3.4.2"/>
    </reaction>
</comment>
<comment type="catalytic activity">
    <reaction evidence="1">
        <text>L-glutamine + H2O = L-glutamate + NH4(+)</text>
        <dbReference type="Rhea" id="RHEA:15889"/>
        <dbReference type="ChEBI" id="CHEBI:15377"/>
        <dbReference type="ChEBI" id="CHEBI:28938"/>
        <dbReference type="ChEBI" id="CHEBI:29985"/>
        <dbReference type="ChEBI" id="CHEBI:58359"/>
    </reaction>
</comment>
<comment type="catalytic activity">
    <reaction evidence="1">
        <text>UTP + NH4(+) + ATP = CTP + ADP + phosphate + 2 H(+)</text>
        <dbReference type="Rhea" id="RHEA:16597"/>
        <dbReference type="ChEBI" id="CHEBI:15378"/>
        <dbReference type="ChEBI" id="CHEBI:28938"/>
        <dbReference type="ChEBI" id="CHEBI:30616"/>
        <dbReference type="ChEBI" id="CHEBI:37563"/>
        <dbReference type="ChEBI" id="CHEBI:43474"/>
        <dbReference type="ChEBI" id="CHEBI:46398"/>
        <dbReference type="ChEBI" id="CHEBI:456216"/>
    </reaction>
</comment>
<comment type="activity regulation">
    <text evidence="1">Allosterically activated by GTP, when glutamine is the substrate; GTP has no effect on the reaction when ammonia is the substrate. The allosteric effector GTP functions by stabilizing the protein conformation that binds the tetrahedral intermediate(s) formed during glutamine hydrolysis. Inhibited by the product CTP, via allosteric rather than competitive inhibition.</text>
</comment>
<comment type="pathway">
    <text evidence="1">Pyrimidine metabolism; CTP biosynthesis via de novo pathway; CTP from UDP: step 2/2.</text>
</comment>
<comment type="subunit">
    <text evidence="1">Homotetramer.</text>
</comment>
<comment type="miscellaneous">
    <text evidence="1">CTPSs have evolved a hybrid strategy for distinguishing between UTP and CTP. The overlapping regions of the product feedback inhibitory and substrate sites recognize a common feature in both compounds, the triphosphate moiety. To differentiate isosteric substrate and product pyrimidine rings, an additional pocket far from the expected kinase/ligase catalytic site, specifically recognizes the cytosine and ribose portions of the product inhibitor.</text>
</comment>
<comment type="similarity">
    <text evidence="1">Belongs to the CTP synthase family.</text>
</comment>
<reference key="1">
    <citation type="journal article" date="2002" name="Proc. Natl. Acad. Sci. U.S.A.">
        <title>Complete genome sequence and comparative genomic analysis of an emerging human pathogen, serotype V Streptococcus agalactiae.</title>
        <authorList>
            <person name="Tettelin H."/>
            <person name="Masignani V."/>
            <person name="Cieslewicz M.J."/>
            <person name="Eisen J.A."/>
            <person name="Peterson S.N."/>
            <person name="Wessels M.R."/>
            <person name="Paulsen I.T."/>
            <person name="Nelson K.E."/>
            <person name="Margarit I."/>
            <person name="Read T.D."/>
            <person name="Madoff L.C."/>
            <person name="Wolf A.M."/>
            <person name="Beanan M.J."/>
            <person name="Brinkac L.M."/>
            <person name="Daugherty S.C."/>
            <person name="DeBoy R.T."/>
            <person name="Durkin A.S."/>
            <person name="Kolonay J.F."/>
            <person name="Madupu R."/>
            <person name="Lewis M.R."/>
            <person name="Radune D."/>
            <person name="Fedorova N.B."/>
            <person name="Scanlan D."/>
            <person name="Khouri H.M."/>
            <person name="Mulligan S."/>
            <person name="Carty H.A."/>
            <person name="Cline R.T."/>
            <person name="Van Aken S.E."/>
            <person name="Gill J."/>
            <person name="Scarselli M."/>
            <person name="Mora M."/>
            <person name="Iacobini E.T."/>
            <person name="Brettoni C."/>
            <person name="Galli G."/>
            <person name="Mariani M."/>
            <person name="Vegni F."/>
            <person name="Maione D."/>
            <person name="Rinaudo D."/>
            <person name="Rappuoli R."/>
            <person name="Telford J.L."/>
            <person name="Kasper D.L."/>
            <person name="Grandi G."/>
            <person name="Fraser C.M."/>
        </authorList>
    </citation>
    <scope>NUCLEOTIDE SEQUENCE [LARGE SCALE GENOMIC DNA]</scope>
    <source>
        <strain>ATCC BAA-611 / 2603 V/R</strain>
    </source>
</reference>
<protein>
    <recommendedName>
        <fullName evidence="1">CTP synthase</fullName>
        <ecNumber evidence="1">6.3.4.2</ecNumber>
    </recommendedName>
    <alternativeName>
        <fullName evidence="1">Cytidine 5'-triphosphate synthase</fullName>
    </alternativeName>
    <alternativeName>
        <fullName evidence="1">Cytidine triphosphate synthetase</fullName>
        <shortName evidence="1">CTP synthetase</shortName>
        <shortName evidence="1">CTPS</shortName>
    </alternativeName>
    <alternativeName>
        <fullName evidence="1">UTP--ammonia ligase</fullName>
    </alternativeName>
</protein>
<proteinExistence type="inferred from homology"/>
<accession>Q8E290</accession>
<feature type="chain" id="PRO_0000266229" description="CTP synthase">
    <location>
        <begin position="1"/>
        <end position="534"/>
    </location>
</feature>
<feature type="domain" description="Glutamine amidotransferase type-1" evidence="1">
    <location>
        <begin position="292"/>
        <end position="534"/>
    </location>
</feature>
<feature type="region of interest" description="Amidoligase domain" evidence="1">
    <location>
        <begin position="1"/>
        <end position="267"/>
    </location>
</feature>
<feature type="active site" description="Nucleophile; for glutamine hydrolysis" evidence="1">
    <location>
        <position position="381"/>
    </location>
</feature>
<feature type="active site" evidence="1">
    <location>
        <position position="508"/>
    </location>
</feature>
<feature type="active site" evidence="1">
    <location>
        <position position="510"/>
    </location>
</feature>
<feature type="binding site" evidence="1">
    <location>
        <position position="13"/>
    </location>
    <ligand>
        <name>CTP</name>
        <dbReference type="ChEBI" id="CHEBI:37563"/>
        <note>allosteric inhibitor</note>
    </ligand>
</feature>
<feature type="binding site" evidence="1">
    <location>
        <position position="13"/>
    </location>
    <ligand>
        <name>UTP</name>
        <dbReference type="ChEBI" id="CHEBI:46398"/>
    </ligand>
</feature>
<feature type="binding site" evidence="1">
    <location>
        <begin position="14"/>
        <end position="19"/>
    </location>
    <ligand>
        <name>ATP</name>
        <dbReference type="ChEBI" id="CHEBI:30616"/>
    </ligand>
</feature>
<feature type="binding site" evidence="1">
    <location>
        <position position="54"/>
    </location>
    <ligand>
        <name>L-glutamine</name>
        <dbReference type="ChEBI" id="CHEBI:58359"/>
    </ligand>
</feature>
<feature type="binding site" evidence="1">
    <location>
        <position position="71"/>
    </location>
    <ligand>
        <name>ATP</name>
        <dbReference type="ChEBI" id="CHEBI:30616"/>
    </ligand>
</feature>
<feature type="binding site" evidence="1">
    <location>
        <position position="71"/>
    </location>
    <ligand>
        <name>Mg(2+)</name>
        <dbReference type="ChEBI" id="CHEBI:18420"/>
    </ligand>
</feature>
<feature type="binding site" evidence="1">
    <location>
        <position position="141"/>
    </location>
    <ligand>
        <name>Mg(2+)</name>
        <dbReference type="ChEBI" id="CHEBI:18420"/>
    </ligand>
</feature>
<feature type="binding site" evidence="1">
    <location>
        <begin position="148"/>
        <end position="150"/>
    </location>
    <ligand>
        <name>CTP</name>
        <dbReference type="ChEBI" id="CHEBI:37563"/>
        <note>allosteric inhibitor</note>
    </ligand>
</feature>
<feature type="binding site" evidence="1">
    <location>
        <begin position="188"/>
        <end position="193"/>
    </location>
    <ligand>
        <name>CTP</name>
        <dbReference type="ChEBI" id="CHEBI:37563"/>
        <note>allosteric inhibitor</note>
    </ligand>
</feature>
<feature type="binding site" evidence="1">
    <location>
        <begin position="188"/>
        <end position="193"/>
    </location>
    <ligand>
        <name>UTP</name>
        <dbReference type="ChEBI" id="CHEBI:46398"/>
    </ligand>
</feature>
<feature type="binding site" evidence="1">
    <location>
        <position position="224"/>
    </location>
    <ligand>
        <name>CTP</name>
        <dbReference type="ChEBI" id="CHEBI:37563"/>
        <note>allosteric inhibitor</note>
    </ligand>
</feature>
<feature type="binding site" evidence="1">
    <location>
        <position position="224"/>
    </location>
    <ligand>
        <name>UTP</name>
        <dbReference type="ChEBI" id="CHEBI:46398"/>
    </ligand>
</feature>
<feature type="binding site" evidence="1">
    <location>
        <position position="354"/>
    </location>
    <ligand>
        <name>L-glutamine</name>
        <dbReference type="ChEBI" id="CHEBI:58359"/>
    </ligand>
</feature>
<feature type="binding site" evidence="1">
    <location>
        <begin position="382"/>
        <end position="385"/>
    </location>
    <ligand>
        <name>L-glutamine</name>
        <dbReference type="ChEBI" id="CHEBI:58359"/>
    </ligand>
</feature>
<feature type="binding site" evidence="1">
    <location>
        <position position="405"/>
    </location>
    <ligand>
        <name>L-glutamine</name>
        <dbReference type="ChEBI" id="CHEBI:58359"/>
    </ligand>
</feature>
<feature type="binding site" evidence="1">
    <location>
        <position position="463"/>
    </location>
    <ligand>
        <name>L-glutamine</name>
        <dbReference type="ChEBI" id="CHEBI:58359"/>
    </ligand>
</feature>